<gene>
    <name evidence="1" type="primary">nsrR</name>
    <name type="ordered locus">YE0383</name>
</gene>
<evidence type="ECO:0000255" key="1">
    <source>
        <dbReference type="HAMAP-Rule" id="MF_01177"/>
    </source>
</evidence>
<organism>
    <name type="scientific">Yersinia enterocolitica serotype O:8 / biotype 1B (strain NCTC 13174 / 8081)</name>
    <dbReference type="NCBI Taxonomy" id="393305"/>
    <lineage>
        <taxon>Bacteria</taxon>
        <taxon>Pseudomonadati</taxon>
        <taxon>Pseudomonadota</taxon>
        <taxon>Gammaproteobacteria</taxon>
        <taxon>Enterobacterales</taxon>
        <taxon>Yersiniaceae</taxon>
        <taxon>Yersinia</taxon>
    </lineage>
</organism>
<accession>A1JIS1</accession>
<protein>
    <recommendedName>
        <fullName evidence="1">HTH-type transcriptional repressor NsrR</fullName>
    </recommendedName>
</protein>
<keyword id="KW-0001">2Fe-2S</keyword>
<keyword id="KW-0238">DNA-binding</keyword>
<keyword id="KW-0408">Iron</keyword>
<keyword id="KW-0411">Iron-sulfur</keyword>
<keyword id="KW-0479">Metal-binding</keyword>
<keyword id="KW-0678">Repressor</keyword>
<keyword id="KW-0804">Transcription</keyword>
<keyword id="KW-0805">Transcription regulation</keyword>
<name>NSRR_YERE8</name>
<reference key="1">
    <citation type="journal article" date="2006" name="PLoS Genet.">
        <title>The complete genome sequence and comparative genome analysis of the high pathogenicity Yersinia enterocolitica strain 8081.</title>
        <authorList>
            <person name="Thomson N.R."/>
            <person name="Howard S."/>
            <person name="Wren B.W."/>
            <person name="Holden M.T.G."/>
            <person name="Crossman L."/>
            <person name="Challis G.L."/>
            <person name="Churcher C."/>
            <person name="Mungall K."/>
            <person name="Brooks K."/>
            <person name="Chillingworth T."/>
            <person name="Feltwell T."/>
            <person name="Abdellah Z."/>
            <person name="Hauser H."/>
            <person name="Jagels K."/>
            <person name="Maddison M."/>
            <person name="Moule S."/>
            <person name="Sanders M."/>
            <person name="Whitehead S."/>
            <person name="Quail M.A."/>
            <person name="Dougan G."/>
            <person name="Parkhill J."/>
            <person name="Prentice M.B."/>
        </authorList>
    </citation>
    <scope>NUCLEOTIDE SEQUENCE [LARGE SCALE GENOMIC DNA]</scope>
    <source>
        <strain>NCTC 13174 / 8081</strain>
    </source>
</reference>
<feature type="chain" id="PRO_1000085440" description="HTH-type transcriptional repressor NsrR">
    <location>
        <begin position="1"/>
        <end position="141"/>
    </location>
</feature>
<feature type="domain" description="HTH rrf2-type" evidence="1">
    <location>
        <begin position="2"/>
        <end position="129"/>
    </location>
</feature>
<feature type="DNA-binding region" description="H-T-H motif" evidence="1">
    <location>
        <begin position="28"/>
        <end position="51"/>
    </location>
</feature>
<feature type="binding site" evidence="1">
    <location>
        <position position="91"/>
    </location>
    <ligand>
        <name>[2Fe-2S] cluster</name>
        <dbReference type="ChEBI" id="CHEBI:190135"/>
    </ligand>
</feature>
<feature type="binding site" evidence="1">
    <location>
        <position position="96"/>
    </location>
    <ligand>
        <name>[2Fe-2S] cluster</name>
        <dbReference type="ChEBI" id="CHEBI:190135"/>
    </ligand>
</feature>
<feature type="binding site" evidence="1">
    <location>
        <position position="102"/>
    </location>
    <ligand>
        <name>[2Fe-2S] cluster</name>
        <dbReference type="ChEBI" id="CHEBI:190135"/>
    </ligand>
</feature>
<dbReference type="EMBL" id="AM286415">
    <property type="protein sequence ID" value="CAL10512.1"/>
    <property type="molecule type" value="Genomic_DNA"/>
</dbReference>
<dbReference type="RefSeq" id="WP_005175497.1">
    <property type="nucleotide sequence ID" value="NC_008800.1"/>
</dbReference>
<dbReference type="RefSeq" id="YP_001004758.1">
    <property type="nucleotide sequence ID" value="NC_008800.1"/>
</dbReference>
<dbReference type="SMR" id="A1JIS1"/>
<dbReference type="KEGG" id="yen:YE0383"/>
<dbReference type="PATRIC" id="fig|393305.7.peg.479"/>
<dbReference type="eggNOG" id="COG1959">
    <property type="taxonomic scope" value="Bacteria"/>
</dbReference>
<dbReference type="HOGENOM" id="CLU_107144_2_1_6"/>
<dbReference type="OrthoDB" id="9795923at2"/>
<dbReference type="Proteomes" id="UP000000642">
    <property type="component" value="Chromosome"/>
</dbReference>
<dbReference type="GO" id="GO:0005829">
    <property type="term" value="C:cytosol"/>
    <property type="evidence" value="ECO:0007669"/>
    <property type="project" value="TreeGrafter"/>
</dbReference>
<dbReference type="GO" id="GO:0051537">
    <property type="term" value="F:2 iron, 2 sulfur cluster binding"/>
    <property type="evidence" value="ECO:0007669"/>
    <property type="project" value="UniProtKB-KW"/>
</dbReference>
<dbReference type="GO" id="GO:0003700">
    <property type="term" value="F:DNA-binding transcription factor activity"/>
    <property type="evidence" value="ECO:0007669"/>
    <property type="project" value="UniProtKB-UniRule"/>
</dbReference>
<dbReference type="GO" id="GO:0003690">
    <property type="term" value="F:double-stranded DNA binding"/>
    <property type="evidence" value="ECO:0007669"/>
    <property type="project" value="UniProtKB-UniRule"/>
</dbReference>
<dbReference type="GO" id="GO:0005506">
    <property type="term" value="F:iron ion binding"/>
    <property type="evidence" value="ECO:0007669"/>
    <property type="project" value="UniProtKB-UniRule"/>
</dbReference>
<dbReference type="GO" id="GO:0045892">
    <property type="term" value="P:negative regulation of DNA-templated transcription"/>
    <property type="evidence" value="ECO:0007669"/>
    <property type="project" value="InterPro"/>
</dbReference>
<dbReference type="FunFam" id="1.10.10.10:FF:000105">
    <property type="entry name" value="HTH-type transcriptional repressor NsrR"/>
    <property type="match status" value="1"/>
</dbReference>
<dbReference type="Gene3D" id="1.10.10.10">
    <property type="entry name" value="Winged helix-like DNA-binding domain superfamily/Winged helix DNA-binding domain"/>
    <property type="match status" value="1"/>
</dbReference>
<dbReference type="HAMAP" id="MF_01177">
    <property type="entry name" value="HTH_type_NsrR"/>
    <property type="match status" value="1"/>
</dbReference>
<dbReference type="InterPro" id="IPR030489">
    <property type="entry name" value="TR_Rrf2-type_CS"/>
</dbReference>
<dbReference type="InterPro" id="IPR000944">
    <property type="entry name" value="Tscrpt_reg_Rrf2"/>
</dbReference>
<dbReference type="InterPro" id="IPR023761">
    <property type="entry name" value="Tscrpt_rep_HTH_NsrR"/>
</dbReference>
<dbReference type="InterPro" id="IPR036388">
    <property type="entry name" value="WH-like_DNA-bd_sf"/>
</dbReference>
<dbReference type="InterPro" id="IPR036390">
    <property type="entry name" value="WH_DNA-bd_sf"/>
</dbReference>
<dbReference type="NCBIfam" id="NF008240">
    <property type="entry name" value="PRK11014.1"/>
    <property type="match status" value="1"/>
</dbReference>
<dbReference type="NCBIfam" id="TIGR00738">
    <property type="entry name" value="rrf2_super"/>
    <property type="match status" value="1"/>
</dbReference>
<dbReference type="PANTHER" id="PTHR33221:SF4">
    <property type="entry name" value="HTH-TYPE TRANSCRIPTIONAL REPRESSOR NSRR"/>
    <property type="match status" value="1"/>
</dbReference>
<dbReference type="PANTHER" id="PTHR33221">
    <property type="entry name" value="WINGED HELIX-TURN-HELIX TRANSCRIPTIONAL REGULATOR, RRF2 FAMILY"/>
    <property type="match status" value="1"/>
</dbReference>
<dbReference type="Pfam" id="PF02082">
    <property type="entry name" value="Rrf2"/>
    <property type="match status" value="1"/>
</dbReference>
<dbReference type="SUPFAM" id="SSF46785">
    <property type="entry name" value="Winged helix' DNA-binding domain"/>
    <property type="match status" value="1"/>
</dbReference>
<dbReference type="PROSITE" id="PS01332">
    <property type="entry name" value="HTH_RRF2_1"/>
    <property type="match status" value="1"/>
</dbReference>
<dbReference type="PROSITE" id="PS51197">
    <property type="entry name" value="HTH_RRF2_2"/>
    <property type="match status" value="1"/>
</dbReference>
<proteinExistence type="inferred from homology"/>
<comment type="function">
    <text evidence="1">Nitric oxide-sensitive repressor of genes involved in protecting the cell against nitrosative stress. May require iron for activity.</text>
</comment>
<comment type="cofactor">
    <cofactor evidence="1">
        <name>[2Fe-2S] cluster</name>
        <dbReference type="ChEBI" id="CHEBI:190135"/>
    </cofactor>
    <text evidence="1">Binds 1 [2Fe-2S] cluster per subunit.</text>
</comment>
<sequence length="141" mass="15692">MQLTSFTDYGLRALTYMASLPEGQMTSISQVTEVYGVSRNHMVKIINQLSRVGLVTAVRGKNGGIRLGKPADQIRIGDVVRQLEPLSLVNCSSDFCHITPACRLKQVLNQAVQSFLNELDNYTLADMVQDNTPLYKLLFVE</sequence>